<dbReference type="EMBL" id="CP000381">
    <property type="protein sequence ID" value="ABX73067.1"/>
    <property type="molecule type" value="Genomic_DNA"/>
</dbReference>
<dbReference type="RefSeq" id="WP_012221548.1">
    <property type="nucleotide sequence ID" value="NC_010120.1"/>
</dbReference>
<dbReference type="SMR" id="A9M4E1"/>
<dbReference type="KEGG" id="nmn:NMCC_0885"/>
<dbReference type="HOGENOM" id="CLU_114306_2_1_4"/>
<dbReference type="Proteomes" id="UP000001177">
    <property type="component" value="Chromosome"/>
</dbReference>
<dbReference type="GO" id="GO:1990904">
    <property type="term" value="C:ribonucleoprotein complex"/>
    <property type="evidence" value="ECO:0007669"/>
    <property type="project" value="UniProtKB-KW"/>
</dbReference>
<dbReference type="GO" id="GO:0005840">
    <property type="term" value="C:ribosome"/>
    <property type="evidence" value="ECO:0007669"/>
    <property type="project" value="UniProtKB-KW"/>
</dbReference>
<dbReference type="GO" id="GO:0003735">
    <property type="term" value="F:structural constituent of ribosome"/>
    <property type="evidence" value="ECO:0007669"/>
    <property type="project" value="InterPro"/>
</dbReference>
<dbReference type="GO" id="GO:0006412">
    <property type="term" value="P:translation"/>
    <property type="evidence" value="ECO:0007669"/>
    <property type="project" value="UniProtKB-UniRule"/>
</dbReference>
<dbReference type="Gene3D" id="4.10.830.30">
    <property type="entry name" value="Ribosomal protein L31"/>
    <property type="match status" value="1"/>
</dbReference>
<dbReference type="HAMAP" id="MF_00502">
    <property type="entry name" value="Ribosomal_bL31_2"/>
    <property type="match status" value="1"/>
</dbReference>
<dbReference type="InterPro" id="IPR034704">
    <property type="entry name" value="Ribosomal_bL28/bL31-like_sf"/>
</dbReference>
<dbReference type="InterPro" id="IPR002150">
    <property type="entry name" value="Ribosomal_bL31"/>
</dbReference>
<dbReference type="InterPro" id="IPR027493">
    <property type="entry name" value="Ribosomal_bL31_B"/>
</dbReference>
<dbReference type="InterPro" id="IPR042105">
    <property type="entry name" value="Ribosomal_bL31_sf"/>
</dbReference>
<dbReference type="NCBIfam" id="TIGR00105">
    <property type="entry name" value="L31"/>
    <property type="match status" value="1"/>
</dbReference>
<dbReference type="NCBIfam" id="NF002462">
    <property type="entry name" value="PRK01678.1"/>
    <property type="match status" value="1"/>
</dbReference>
<dbReference type="PANTHER" id="PTHR33280">
    <property type="entry name" value="50S RIBOSOMAL PROTEIN L31, CHLOROPLASTIC"/>
    <property type="match status" value="1"/>
</dbReference>
<dbReference type="PANTHER" id="PTHR33280:SF1">
    <property type="entry name" value="LARGE RIBOSOMAL SUBUNIT PROTEIN BL31C"/>
    <property type="match status" value="1"/>
</dbReference>
<dbReference type="Pfam" id="PF01197">
    <property type="entry name" value="Ribosomal_L31"/>
    <property type="match status" value="1"/>
</dbReference>
<dbReference type="PRINTS" id="PR01249">
    <property type="entry name" value="RIBOSOMALL31"/>
</dbReference>
<dbReference type="SUPFAM" id="SSF143800">
    <property type="entry name" value="L28p-like"/>
    <property type="match status" value="1"/>
</dbReference>
<dbReference type="PROSITE" id="PS01143">
    <property type="entry name" value="RIBOSOMAL_L31"/>
    <property type="match status" value="1"/>
</dbReference>
<name>RL31B_NEIM0</name>
<sequence>MKPNIHPDNYRTVLFFDSSANEGWMIRSCAETHGKTMVWTDGKEYPLFSLDTSSASHPVYTGKQRNVNTEGRASKFNQRFQSVMSSFRKDK</sequence>
<proteinExistence type="inferred from homology"/>
<reference key="1">
    <citation type="journal article" date="2008" name="Genomics">
        <title>Characterization of ST-4821 complex, a unique Neisseria meningitidis clone.</title>
        <authorList>
            <person name="Peng J."/>
            <person name="Yang L."/>
            <person name="Yang F."/>
            <person name="Yang J."/>
            <person name="Yan Y."/>
            <person name="Nie H."/>
            <person name="Zhang X."/>
            <person name="Xiong Z."/>
            <person name="Jiang Y."/>
            <person name="Cheng F."/>
            <person name="Xu X."/>
            <person name="Chen S."/>
            <person name="Sun L."/>
            <person name="Li W."/>
            <person name="Shen Y."/>
            <person name="Shao Z."/>
            <person name="Liang X."/>
            <person name="Xu J."/>
            <person name="Jin Q."/>
        </authorList>
    </citation>
    <scope>NUCLEOTIDE SEQUENCE [LARGE SCALE GENOMIC DNA]</scope>
    <source>
        <strain>053442</strain>
    </source>
</reference>
<keyword id="KW-0687">Ribonucleoprotein</keyword>
<keyword id="KW-0689">Ribosomal protein</keyword>
<comment type="subunit">
    <text evidence="1">Part of the 50S ribosomal subunit.</text>
</comment>
<comment type="similarity">
    <text evidence="1">Belongs to the bacterial ribosomal protein bL31 family. Type B subfamily.</text>
</comment>
<accession>A9M4E1</accession>
<evidence type="ECO:0000255" key="1">
    <source>
        <dbReference type="HAMAP-Rule" id="MF_00502"/>
    </source>
</evidence>
<evidence type="ECO:0000305" key="2"/>
<organism>
    <name type="scientific">Neisseria meningitidis serogroup C (strain 053442)</name>
    <dbReference type="NCBI Taxonomy" id="374833"/>
    <lineage>
        <taxon>Bacteria</taxon>
        <taxon>Pseudomonadati</taxon>
        <taxon>Pseudomonadota</taxon>
        <taxon>Betaproteobacteria</taxon>
        <taxon>Neisseriales</taxon>
        <taxon>Neisseriaceae</taxon>
        <taxon>Neisseria</taxon>
    </lineage>
</organism>
<protein>
    <recommendedName>
        <fullName evidence="1">Large ribosomal subunit protein bL31B</fullName>
    </recommendedName>
    <alternativeName>
        <fullName evidence="2">50S ribosomal protein L31 type B</fullName>
    </alternativeName>
</protein>
<feature type="chain" id="PRO_1000081454" description="Large ribosomal subunit protein bL31B">
    <location>
        <begin position="1"/>
        <end position="91"/>
    </location>
</feature>
<gene>
    <name evidence="1" type="primary">rpmE2</name>
    <name type="ordered locus">NMCC_0885</name>
</gene>